<accession>A8Y1E9</accession>
<comment type="function">
    <text evidence="3">DNA-dependent RNA polymerase catalyzes the transcription of DNA into RNA using the four ribonucleoside triphosphates as substrates. Common component of RNA polymerases I, II and III which synthesize ribosomal RNA precursors, mRNA precursors and many functional non-coding RNAs, and a small RNAs, such as 5S rRNA and tRNAs, respectively. Pol II is the central component of the basal RNA polymerase II transcription machinery. Pols are composed of mobile elements that move relative to each other. In Pol II, RBP10 is part of the core element with the central large cleft (By similarity).</text>
</comment>
<comment type="subunit">
    <text evidence="2">Component of the RNA polymerase I (Pol I), RNA polymerase II (Pol II) and RNA polymerase III (Pol III) complexes consisting of at least 13, 12 and 17 subunits, respectively.</text>
</comment>
<comment type="subcellular location">
    <subcellularLocation>
        <location evidence="3">Nucleus</location>
    </subcellularLocation>
</comment>
<comment type="similarity">
    <text evidence="5">Belongs to the archaeal Rpo10/eukaryotic RPB10 RNA polymerase subunit family.</text>
</comment>
<organism>
    <name type="scientific">Caenorhabditis briggsae</name>
    <dbReference type="NCBI Taxonomy" id="6238"/>
    <lineage>
        <taxon>Eukaryota</taxon>
        <taxon>Metazoa</taxon>
        <taxon>Ecdysozoa</taxon>
        <taxon>Nematoda</taxon>
        <taxon>Chromadorea</taxon>
        <taxon>Rhabditida</taxon>
        <taxon>Rhabditina</taxon>
        <taxon>Rhabditomorpha</taxon>
        <taxon>Rhabditoidea</taxon>
        <taxon>Rhabditidae</taxon>
        <taxon>Peloderinae</taxon>
        <taxon>Caenorhabditis</taxon>
    </lineage>
</organism>
<protein>
    <recommendedName>
        <fullName evidence="4">DNA-directed RNA polymerases I, II, and III subunit RPABC5</fullName>
        <shortName evidence="4">RNA polymerases I, II, and III subunit ABC5</shortName>
    </recommendedName>
</protein>
<dbReference type="EMBL" id="HE601428">
    <property type="protein sequence ID" value="CAP38718.1"/>
    <property type="molecule type" value="Genomic_DNA"/>
</dbReference>
<dbReference type="SMR" id="A8Y1E9"/>
<dbReference type="FunCoup" id="A8Y1E9">
    <property type="interactions" value="1479"/>
</dbReference>
<dbReference type="STRING" id="6238.A8Y1E9"/>
<dbReference type="EnsemblMetazoa" id="CBG22047.1">
    <property type="protein sequence ID" value="CBG22047.1"/>
    <property type="gene ID" value="WBGene00040688"/>
</dbReference>
<dbReference type="KEGG" id="cbr:CBG_22047"/>
<dbReference type="CTD" id="8580835"/>
<dbReference type="WormBase" id="CBG22047">
    <property type="protein sequence ID" value="CBP05278"/>
    <property type="gene ID" value="WBGene00040688"/>
    <property type="gene designation" value="Cbr-rpb-10"/>
</dbReference>
<dbReference type="eggNOG" id="KOG3497">
    <property type="taxonomic scope" value="Eukaryota"/>
</dbReference>
<dbReference type="HOGENOM" id="CLU_143122_1_1_1"/>
<dbReference type="InParanoid" id="A8Y1E9"/>
<dbReference type="OMA" id="YCCRRMF"/>
<dbReference type="OrthoDB" id="10258858at2759"/>
<dbReference type="Proteomes" id="UP000008549">
    <property type="component" value="Unassembled WGS sequence"/>
</dbReference>
<dbReference type="GO" id="GO:0005736">
    <property type="term" value="C:RNA polymerase I complex"/>
    <property type="evidence" value="ECO:0000318"/>
    <property type="project" value="GO_Central"/>
</dbReference>
<dbReference type="GO" id="GO:0005665">
    <property type="term" value="C:RNA polymerase II, core complex"/>
    <property type="evidence" value="ECO:0000318"/>
    <property type="project" value="GO_Central"/>
</dbReference>
<dbReference type="GO" id="GO:0005666">
    <property type="term" value="C:RNA polymerase III complex"/>
    <property type="evidence" value="ECO:0000318"/>
    <property type="project" value="GO_Central"/>
</dbReference>
<dbReference type="GO" id="GO:0003677">
    <property type="term" value="F:DNA binding"/>
    <property type="evidence" value="ECO:0007669"/>
    <property type="project" value="InterPro"/>
</dbReference>
<dbReference type="GO" id="GO:0003899">
    <property type="term" value="F:DNA-directed RNA polymerase activity"/>
    <property type="evidence" value="ECO:0007669"/>
    <property type="project" value="InterPro"/>
</dbReference>
<dbReference type="GO" id="GO:0008270">
    <property type="term" value="F:zinc ion binding"/>
    <property type="evidence" value="ECO:0000318"/>
    <property type="project" value="GO_Central"/>
</dbReference>
<dbReference type="GO" id="GO:0006360">
    <property type="term" value="P:transcription by RNA polymerase I"/>
    <property type="evidence" value="ECO:0000318"/>
    <property type="project" value="GO_Central"/>
</dbReference>
<dbReference type="GO" id="GO:0006366">
    <property type="term" value="P:transcription by RNA polymerase II"/>
    <property type="evidence" value="ECO:0000318"/>
    <property type="project" value="GO_Central"/>
</dbReference>
<dbReference type="GO" id="GO:0042797">
    <property type="term" value="P:tRNA transcription by RNA polymerase III"/>
    <property type="evidence" value="ECO:0000318"/>
    <property type="project" value="GO_Central"/>
</dbReference>
<dbReference type="FunFam" id="1.10.10.60:FF:000024">
    <property type="entry name" value="DNA-directed RNA polymerases I, II, and III subunit"/>
    <property type="match status" value="1"/>
</dbReference>
<dbReference type="Gene3D" id="1.10.10.60">
    <property type="entry name" value="Homeodomain-like"/>
    <property type="match status" value="1"/>
</dbReference>
<dbReference type="HAMAP" id="MF_00250">
    <property type="entry name" value="RNApol_arch_Rpo10"/>
    <property type="match status" value="1"/>
</dbReference>
<dbReference type="InterPro" id="IPR023580">
    <property type="entry name" value="RNA_pol_su_RPB10"/>
</dbReference>
<dbReference type="InterPro" id="IPR020789">
    <property type="entry name" value="RNA_pol_suN_Zn-BS"/>
</dbReference>
<dbReference type="InterPro" id="IPR000268">
    <property type="entry name" value="RPABC5/Rpb10"/>
</dbReference>
<dbReference type="NCBIfam" id="NF003089">
    <property type="entry name" value="PRK04016.1"/>
    <property type="match status" value="1"/>
</dbReference>
<dbReference type="PANTHER" id="PTHR23431:SF3">
    <property type="entry name" value="DNA-DIRECTED RNA POLYMERASES I, II, AND III SUBUNIT RPABC5"/>
    <property type="match status" value="1"/>
</dbReference>
<dbReference type="PANTHER" id="PTHR23431">
    <property type="entry name" value="DNA-DIRECTED RNA POLYMERASES I, II, AND III SUBUNIT RPABC5 FAMILY MEMBER"/>
    <property type="match status" value="1"/>
</dbReference>
<dbReference type="Pfam" id="PF01194">
    <property type="entry name" value="RNA_pol_N"/>
    <property type="match status" value="1"/>
</dbReference>
<dbReference type="PIRSF" id="PIRSF005653">
    <property type="entry name" value="RNA_pol_N/8_sub"/>
    <property type="match status" value="1"/>
</dbReference>
<dbReference type="SUPFAM" id="SSF46924">
    <property type="entry name" value="RNA polymerase subunit RPB10"/>
    <property type="match status" value="1"/>
</dbReference>
<dbReference type="PROSITE" id="PS01112">
    <property type="entry name" value="RNA_POL_N_8KD"/>
    <property type="match status" value="1"/>
</dbReference>
<keyword id="KW-0240">DNA-directed RNA polymerase</keyword>
<keyword id="KW-0479">Metal-binding</keyword>
<keyword id="KW-0539">Nucleus</keyword>
<keyword id="KW-1185">Reference proteome</keyword>
<keyword id="KW-0804">Transcription</keyword>
<keyword id="KW-0862">Zinc</keyword>
<feature type="chain" id="PRO_0000394293" description="DNA-directed RNA polymerases I, II, and III subunit RPABC5">
    <location>
        <begin position="1"/>
        <end position="67"/>
    </location>
</feature>
<feature type="binding site" evidence="1">
    <location>
        <position position="7"/>
    </location>
    <ligand>
        <name>Zn(2+)</name>
        <dbReference type="ChEBI" id="CHEBI:29105"/>
    </ligand>
</feature>
<feature type="binding site" evidence="1">
    <location>
        <position position="10"/>
    </location>
    <ligand>
        <name>Zn(2+)</name>
        <dbReference type="ChEBI" id="CHEBI:29105"/>
    </ligand>
</feature>
<feature type="binding site" evidence="1">
    <location>
        <position position="44"/>
    </location>
    <ligand>
        <name>Zn(2+)</name>
        <dbReference type="ChEBI" id="CHEBI:29105"/>
    </ligand>
</feature>
<feature type="binding site" evidence="1">
    <location>
        <position position="45"/>
    </location>
    <ligand>
        <name>Zn(2+)</name>
        <dbReference type="ChEBI" id="CHEBI:29105"/>
    </ligand>
</feature>
<sequence length="67" mass="7820">MIIPIRCFTCGKVIGDKWETYLGFLQSEYSEGDALDALGLRRYCCRRMLLAHVDLIEKLLNYHPLEK</sequence>
<name>RPAB5_CAEBR</name>
<reference evidence="6" key="1">
    <citation type="journal article" date="2003" name="PLoS Biol.">
        <title>The genome sequence of Caenorhabditis briggsae: a platform for comparative genomics.</title>
        <authorList>
            <person name="Stein L.D."/>
            <person name="Bao Z."/>
            <person name="Blasiar D."/>
            <person name="Blumenthal T."/>
            <person name="Brent M.R."/>
            <person name="Chen N."/>
            <person name="Chinwalla A."/>
            <person name="Clarke L."/>
            <person name="Clee C."/>
            <person name="Coghlan A."/>
            <person name="Coulson A."/>
            <person name="D'Eustachio P."/>
            <person name="Fitch D.H.A."/>
            <person name="Fulton L.A."/>
            <person name="Fulton R.E."/>
            <person name="Griffiths-Jones S."/>
            <person name="Harris T.W."/>
            <person name="Hillier L.W."/>
            <person name="Kamath R."/>
            <person name="Kuwabara P.E."/>
            <person name="Mardis E.R."/>
            <person name="Marra M.A."/>
            <person name="Miner T.L."/>
            <person name="Minx P."/>
            <person name="Mullikin J.C."/>
            <person name="Plumb R.W."/>
            <person name="Rogers J."/>
            <person name="Schein J.E."/>
            <person name="Sohrmann M."/>
            <person name="Spieth J."/>
            <person name="Stajich J.E."/>
            <person name="Wei C."/>
            <person name="Willey D."/>
            <person name="Wilson R.K."/>
            <person name="Durbin R.M."/>
            <person name="Waterston R.H."/>
        </authorList>
    </citation>
    <scope>NUCLEOTIDE SEQUENCE [LARGE SCALE GENOMIC DNA]</scope>
    <source>
        <strain>AF16</strain>
    </source>
</reference>
<gene>
    <name evidence="6" type="primary">rpb-10</name>
    <name type="ORF">CBG22047</name>
</gene>
<proteinExistence type="inferred from homology"/>
<evidence type="ECO:0000250" key="1">
    <source>
        <dbReference type="UniProtKB" id="O26147"/>
    </source>
</evidence>
<evidence type="ECO:0000250" key="2">
    <source>
        <dbReference type="UniProtKB" id="P22139"/>
    </source>
</evidence>
<evidence type="ECO:0000250" key="3">
    <source>
        <dbReference type="UniProtKB" id="P62875"/>
    </source>
</evidence>
<evidence type="ECO:0000250" key="4">
    <source>
        <dbReference type="UniProtKB" id="Q9GR61"/>
    </source>
</evidence>
<evidence type="ECO:0000305" key="5"/>
<evidence type="ECO:0000312" key="6">
    <source>
        <dbReference type="EMBL" id="CAP38718.1"/>
    </source>
</evidence>